<protein>
    <recommendedName>
        <fullName>G protein-coupled receptor kinase 5</fullName>
        <ecNumber>2.7.11.16</ecNumber>
    </recommendedName>
    <alternativeName>
        <fullName>G protein-coupled receptor kinase GRK5</fullName>
    </alternativeName>
</protein>
<accession>Q8VEB1</accession>
<accession>O70292</accession>
<accession>O70297</accession>
<keyword id="KW-0053">Apoptosis</keyword>
<keyword id="KW-0067">ATP-binding</keyword>
<keyword id="KW-1003">Cell membrane</keyword>
<keyword id="KW-0963">Cytoplasm</keyword>
<keyword id="KW-0418">Kinase</keyword>
<keyword id="KW-0446">Lipid-binding</keyword>
<keyword id="KW-0472">Membrane</keyword>
<keyword id="KW-0547">Nucleotide-binding</keyword>
<keyword id="KW-0539">Nucleus</keyword>
<keyword id="KW-0597">Phosphoprotein</keyword>
<keyword id="KW-1185">Reference proteome</keyword>
<keyword id="KW-0723">Serine/threonine-protein kinase</keyword>
<keyword id="KW-0808">Transferase</keyword>
<keyword id="KW-0879">Wnt signaling pathway</keyword>
<feature type="chain" id="PRO_0000085972" description="G protein-coupled receptor kinase 5">
    <location>
        <begin position="1"/>
        <end position="590"/>
    </location>
</feature>
<feature type="domain" description="RGS" evidence="5">
    <location>
        <begin position="53"/>
        <end position="171"/>
    </location>
</feature>
<feature type="domain" description="Protein kinase" evidence="4">
    <location>
        <begin position="186"/>
        <end position="448"/>
    </location>
</feature>
<feature type="domain" description="AGC-kinase C-terminal" evidence="6">
    <location>
        <begin position="449"/>
        <end position="514"/>
    </location>
</feature>
<feature type="region of interest" description="N-terminal">
    <location>
        <begin position="1"/>
        <end position="185"/>
    </location>
</feature>
<feature type="region of interest" description="Interaction with calmodulin" evidence="1">
    <location>
        <begin position="20"/>
        <end position="39"/>
    </location>
</feature>
<feature type="region of interest" description="Sufficient for membrane localization" evidence="1">
    <location>
        <begin position="546"/>
        <end position="565"/>
    </location>
</feature>
<feature type="region of interest" description="Disordered" evidence="7">
    <location>
        <begin position="557"/>
        <end position="590"/>
    </location>
</feature>
<feature type="short sequence motif" description="Nuclear localization signal" evidence="1">
    <location>
        <begin position="388"/>
        <end position="395"/>
    </location>
</feature>
<feature type="compositionally biased region" description="Low complexity" evidence="7">
    <location>
        <begin position="561"/>
        <end position="590"/>
    </location>
</feature>
<feature type="active site" description="Proton acceptor" evidence="4">
    <location>
        <position position="311"/>
    </location>
</feature>
<feature type="binding site" evidence="4">
    <location>
        <begin position="192"/>
        <end position="200"/>
    </location>
    <ligand>
        <name>ATP</name>
        <dbReference type="ChEBI" id="CHEBI:30616"/>
    </ligand>
</feature>
<feature type="binding site" evidence="4">
    <location>
        <position position="215"/>
    </location>
    <ligand>
        <name>ATP</name>
        <dbReference type="ChEBI" id="CHEBI:30616"/>
    </ligand>
</feature>
<feature type="modified residue" description="Phosphoserine" evidence="15">
    <location>
        <position position="136"/>
    </location>
</feature>
<feature type="modified residue" description="Phosphoserine; by autocatalysis" evidence="14 15">
    <location>
        <position position="484"/>
    </location>
</feature>
<feature type="modified residue" description="Phosphothreonine; by autocatalysis" evidence="14 15">
    <location>
        <position position="485"/>
    </location>
</feature>
<feature type="modified residue" description="Phosphoserine" evidence="15">
    <location>
        <position position="579"/>
    </location>
</feature>
<feature type="sequence conflict" description="In Ref. 2; AAH19379." evidence="13" ref="2">
    <original>K</original>
    <variation>T</variation>
    <location>
        <position position="154"/>
    </location>
</feature>
<feature type="sequence conflict" description="In Ref. 1; AAC09271." evidence="13" ref="1">
    <original>N</original>
    <variation>D</variation>
    <location>
        <position position="316"/>
    </location>
</feature>
<feature type="sequence conflict" description="In Ref. 1; AAC09271." evidence="13" ref="1">
    <original>A</original>
    <variation>D</variation>
    <location>
        <position position="353"/>
    </location>
</feature>
<feature type="sequence conflict" description="In Ref. 1; AAC09271." evidence="13" ref="1">
    <original>H</original>
    <variation>R</variation>
    <location>
        <position position="575"/>
    </location>
</feature>
<dbReference type="EC" id="2.7.11.16"/>
<dbReference type="EMBL" id="AF040759">
    <property type="protein sequence ID" value="AAC09271.1"/>
    <property type="molecule type" value="Genomic_DNA"/>
</dbReference>
<dbReference type="EMBL" id="AF040755">
    <property type="protein sequence ID" value="AAC09271.1"/>
    <property type="status" value="JOINED"/>
    <property type="molecule type" value="Genomic_DNA"/>
</dbReference>
<dbReference type="EMBL" id="AF040756">
    <property type="protein sequence ID" value="AAC09271.1"/>
    <property type="status" value="JOINED"/>
    <property type="molecule type" value="Genomic_DNA"/>
</dbReference>
<dbReference type="EMBL" id="AF040757">
    <property type="protein sequence ID" value="AAC09271.1"/>
    <property type="status" value="JOINED"/>
    <property type="molecule type" value="Genomic_DNA"/>
</dbReference>
<dbReference type="EMBL" id="AF040758">
    <property type="protein sequence ID" value="AAC09271.1"/>
    <property type="status" value="JOINED"/>
    <property type="molecule type" value="Genomic_DNA"/>
</dbReference>
<dbReference type="EMBL" id="AF040746">
    <property type="protein sequence ID" value="AAC09267.1"/>
    <property type="molecule type" value="mRNA"/>
</dbReference>
<dbReference type="EMBL" id="BC019379">
    <property type="protein sequence ID" value="AAH19379.1"/>
    <property type="molecule type" value="mRNA"/>
</dbReference>
<dbReference type="CCDS" id="CCDS29945.1"/>
<dbReference type="RefSeq" id="NP_061357.3">
    <property type="nucleotide sequence ID" value="NM_018869.3"/>
</dbReference>
<dbReference type="SMR" id="Q8VEB1"/>
<dbReference type="BioGRID" id="200036">
    <property type="interactions" value="2"/>
</dbReference>
<dbReference type="DIP" id="DIP-46262N"/>
<dbReference type="FunCoup" id="Q8VEB1">
    <property type="interactions" value="2174"/>
</dbReference>
<dbReference type="IntAct" id="Q8VEB1">
    <property type="interactions" value="2"/>
</dbReference>
<dbReference type="MINT" id="Q8VEB1"/>
<dbReference type="STRING" id="10090.ENSMUSP00000003313"/>
<dbReference type="BindingDB" id="Q8VEB1"/>
<dbReference type="ChEMBL" id="CHEMBL3721302"/>
<dbReference type="iPTMnet" id="Q8VEB1"/>
<dbReference type="PhosphoSitePlus" id="Q8VEB1"/>
<dbReference type="jPOST" id="Q8VEB1"/>
<dbReference type="PaxDb" id="10090-ENSMUSP00000003313"/>
<dbReference type="ProteomicsDB" id="269835"/>
<dbReference type="ABCD" id="Q8VEB1">
    <property type="antibodies" value="1 sequenced antibody"/>
</dbReference>
<dbReference type="Antibodypedia" id="18824">
    <property type="antibodies" value="504 antibodies from 38 providers"/>
</dbReference>
<dbReference type="DNASU" id="14773"/>
<dbReference type="Ensembl" id="ENSMUST00000003313.10">
    <property type="protein sequence ID" value="ENSMUSP00000003313.9"/>
    <property type="gene ID" value="ENSMUSG00000003228.10"/>
</dbReference>
<dbReference type="GeneID" id="14773"/>
<dbReference type="KEGG" id="mmu:14773"/>
<dbReference type="UCSC" id="uc008ice.2">
    <property type="organism name" value="mouse"/>
</dbReference>
<dbReference type="AGR" id="MGI:109161"/>
<dbReference type="CTD" id="2869"/>
<dbReference type="MGI" id="MGI:109161">
    <property type="gene designation" value="Grk5"/>
</dbReference>
<dbReference type="VEuPathDB" id="HostDB:ENSMUSG00000003228"/>
<dbReference type="eggNOG" id="KOG0986">
    <property type="taxonomic scope" value="Eukaryota"/>
</dbReference>
<dbReference type="GeneTree" id="ENSGT00940000160702"/>
<dbReference type="HOGENOM" id="CLU_000288_63_41_1"/>
<dbReference type="InParanoid" id="Q8VEB1"/>
<dbReference type="OMA" id="WQTEMME"/>
<dbReference type="OrthoDB" id="354826at2759"/>
<dbReference type="PhylomeDB" id="Q8VEB1"/>
<dbReference type="TreeFam" id="TF313940"/>
<dbReference type="BRENDA" id="2.7.11.16">
    <property type="organism ID" value="3474"/>
</dbReference>
<dbReference type="Reactome" id="R-MMU-418555">
    <property type="pathway name" value="G alpha (s) signalling events"/>
</dbReference>
<dbReference type="BioGRID-ORCS" id="14773">
    <property type="hits" value="3 hits in 80 CRISPR screens"/>
</dbReference>
<dbReference type="ChiTaRS" id="Grk5">
    <property type="organism name" value="mouse"/>
</dbReference>
<dbReference type="PRO" id="PR:Q8VEB1"/>
<dbReference type="Proteomes" id="UP000000589">
    <property type="component" value="Chromosome 19"/>
</dbReference>
<dbReference type="RNAct" id="Q8VEB1">
    <property type="molecule type" value="protein"/>
</dbReference>
<dbReference type="Bgee" id="ENSMUSG00000003228">
    <property type="expression patterns" value="Expressed in blood and 147 other cell types or tissues"/>
</dbReference>
<dbReference type="ExpressionAtlas" id="Q8VEB1">
    <property type="expression patterns" value="baseline and differential"/>
</dbReference>
<dbReference type="GO" id="GO:0005829">
    <property type="term" value="C:cytosol"/>
    <property type="evidence" value="ECO:0007669"/>
    <property type="project" value="Ensembl"/>
</dbReference>
<dbReference type="GO" id="GO:0031965">
    <property type="term" value="C:nuclear membrane"/>
    <property type="evidence" value="ECO:0007669"/>
    <property type="project" value="Ensembl"/>
</dbReference>
<dbReference type="GO" id="GO:0016607">
    <property type="term" value="C:nuclear speck"/>
    <property type="evidence" value="ECO:0007669"/>
    <property type="project" value="Ensembl"/>
</dbReference>
<dbReference type="GO" id="GO:0005886">
    <property type="term" value="C:plasma membrane"/>
    <property type="evidence" value="ECO:0000250"/>
    <property type="project" value="UniProtKB"/>
</dbReference>
<dbReference type="GO" id="GO:0005524">
    <property type="term" value="F:ATP binding"/>
    <property type="evidence" value="ECO:0007669"/>
    <property type="project" value="UniProtKB-KW"/>
</dbReference>
<dbReference type="GO" id="GO:0047696">
    <property type="term" value="F:beta-adrenergic receptor kinase activity"/>
    <property type="evidence" value="ECO:0007669"/>
    <property type="project" value="Ensembl"/>
</dbReference>
<dbReference type="GO" id="GO:0004703">
    <property type="term" value="F:G protein-coupled receptor kinase activity"/>
    <property type="evidence" value="ECO:0007669"/>
    <property type="project" value="UniProtKB-EC"/>
</dbReference>
<dbReference type="GO" id="GO:0008289">
    <property type="term" value="F:lipid binding"/>
    <property type="evidence" value="ECO:0007669"/>
    <property type="project" value="UniProtKB-KW"/>
</dbReference>
<dbReference type="GO" id="GO:0004674">
    <property type="term" value="F:protein serine/threonine kinase activity"/>
    <property type="evidence" value="ECO:0000250"/>
    <property type="project" value="UniProtKB"/>
</dbReference>
<dbReference type="GO" id="GO:0006915">
    <property type="term" value="P:apoptotic process"/>
    <property type="evidence" value="ECO:0007669"/>
    <property type="project" value="UniProtKB-KW"/>
</dbReference>
<dbReference type="GO" id="GO:0045444">
    <property type="term" value="P:fat cell differentiation"/>
    <property type="evidence" value="ECO:0000315"/>
    <property type="project" value="CACAO"/>
</dbReference>
<dbReference type="GO" id="GO:0043066">
    <property type="term" value="P:negative regulation of apoptotic process"/>
    <property type="evidence" value="ECO:0000250"/>
    <property type="project" value="UniProtKB"/>
</dbReference>
<dbReference type="GO" id="GO:0008284">
    <property type="term" value="P:positive regulation of cell population proliferation"/>
    <property type="evidence" value="ECO:0007669"/>
    <property type="project" value="Ensembl"/>
</dbReference>
<dbReference type="GO" id="GO:0046777">
    <property type="term" value="P:protein autophosphorylation"/>
    <property type="evidence" value="ECO:0000250"/>
    <property type="project" value="UniProtKB"/>
</dbReference>
<dbReference type="GO" id="GO:0051726">
    <property type="term" value="P:regulation of cell cycle"/>
    <property type="evidence" value="ECO:0007669"/>
    <property type="project" value="Ensembl"/>
</dbReference>
<dbReference type="GO" id="GO:0007217">
    <property type="term" value="P:tachykinin receptor signaling pathway"/>
    <property type="evidence" value="ECO:0007669"/>
    <property type="project" value="Ensembl"/>
</dbReference>
<dbReference type="GO" id="GO:0016055">
    <property type="term" value="P:Wnt signaling pathway"/>
    <property type="evidence" value="ECO:0007669"/>
    <property type="project" value="UniProtKB-KW"/>
</dbReference>
<dbReference type="CDD" id="cd05632">
    <property type="entry name" value="STKc_GRK5"/>
    <property type="match status" value="1"/>
</dbReference>
<dbReference type="FunFam" id="1.10.167.10:FF:000017">
    <property type="entry name" value="G protein-coupled receptor kinase"/>
    <property type="match status" value="1"/>
</dbReference>
<dbReference type="FunFam" id="1.10.510.10:FF:000074">
    <property type="entry name" value="G protein-coupled receptor kinase"/>
    <property type="match status" value="1"/>
</dbReference>
<dbReference type="Gene3D" id="3.30.200.20">
    <property type="entry name" value="Phosphorylase Kinase, domain 1"/>
    <property type="match status" value="1"/>
</dbReference>
<dbReference type="Gene3D" id="1.10.167.10">
    <property type="entry name" value="Regulator of G-protein Signalling 4, domain 2"/>
    <property type="match status" value="1"/>
</dbReference>
<dbReference type="Gene3D" id="1.10.510.10">
    <property type="entry name" value="Transferase(Phosphotransferase) domain 1"/>
    <property type="match status" value="1"/>
</dbReference>
<dbReference type="InterPro" id="IPR000961">
    <property type="entry name" value="AGC-kinase_C"/>
</dbReference>
<dbReference type="InterPro" id="IPR000239">
    <property type="entry name" value="GPCR_kinase"/>
</dbReference>
<dbReference type="InterPro" id="IPR011009">
    <property type="entry name" value="Kinase-like_dom_sf"/>
</dbReference>
<dbReference type="InterPro" id="IPR000719">
    <property type="entry name" value="Prot_kinase_dom"/>
</dbReference>
<dbReference type="InterPro" id="IPR017441">
    <property type="entry name" value="Protein_kinase_ATP_BS"/>
</dbReference>
<dbReference type="InterPro" id="IPR016137">
    <property type="entry name" value="RGS"/>
</dbReference>
<dbReference type="InterPro" id="IPR036305">
    <property type="entry name" value="RGS_sf"/>
</dbReference>
<dbReference type="InterPro" id="IPR044926">
    <property type="entry name" value="RGS_subdomain_2"/>
</dbReference>
<dbReference type="PANTHER" id="PTHR24355:SF27">
    <property type="entry name" value="G PROTEIN-COUPLED RECEPTOR KINASE 5"/>
    <property type="match status" value="1"/>
</dbReference>
<dbReference type="PANTHER" id="PTHR24355">
    <property type="entry name" value="G PROTEIN-COUPLED RECEPTOR KINASE/RIBOSOMAL PROTEIN S6 KINASE"/>
    <property type="match status" value="1"/>
</dbReference>
<dbReference type="Pfam" id="PF00069">
    <property type="entry name" value="Pkinase"/>
    <property type="match status" value="1"/>
</dbReference>
<dbReference type="Pfam" id="PF00615">
    <property type="entry name" value="RGS"/>
    <property type="match status" value="1"/>
</dbReference>
<dbReference type="PRINTS" id="PR00717">
    <property type="entry name" value="GPCRKINASE"/>
</dbReference>
<dbReference type="SMART" id="SM00315">
    <property type="entry name" value="RGS"/>
    <property type="match status" value="1"/>
</dbReference>
<dbReference type="SMART" id="SM00133">
    <property type="entry name" value="S_TK_X"/>
    <property type="match status" value="1"/>
</dbReference>
<dbReference type="SMART" id="SM00220">
    <property type="entry name" value="S_TKc"/>
    <property type="match status" value="1"/>
</dbReference>
<dbReference type="SUPFAM" id="SSF56112">
    <property type="entry name" value="Protein kinase-like (PK-like)"/>
    <property type="match status" value="1"/>
</dbReference>
<dbReference type="SUPFAM" id="SSF48097">
    <property type="entry name" value="Regulator of G-protein signaling, RGS"/>
    <property type="match status" value="1"/>
</dbReference>
<dbReference type="PROSITE" id="PS51285">
    <property type="entry name" value="AGC_KINASE_CTER"/>
    <property type="match status" value="1"/>
</dbReference>
<dbReference type="PROSITE" id="PS00107">
    <property type="entry name" value="PROTEIN_KINASE_ATP"/>
    <property type="match status" value="1"/>
</dbReference>
<dbReference type="PROSITE" id="PS50011">
    <property type="entry name" value="PROTEIN_KINASE_DOM"/>
    <property type="match status" value="1"/>
</dbReference>
<dbReference type="PROSITE" id="PS50132">
    <property type="entry name" value="RGS"/>
    <property type="match status" value="1"/>
</dbReference>
<comment type="function">
    <text evidence="8 9 10 11">Serine/threonine kinase that phosphorylates preferentially the activated forms of a variety of G-protein-coupled receptors (GPCRs). Such receptor phosphorylation initiates beta-arrestin-mediated receptor desensitization, internalization, and signaling events leading to their down-regulation. Phosphorylates a variety of GPCRs, including adrenergic receptors, muscarinic acetylcholine receptors (more specifically Gi-coupled M2/M4 subtypes), dopamine receptors and opioid receptors. In addition to GPCRs, also phosphorylates various substrates: Hsc70-interacting protein/ST13, TP53/p53, HDAC5, and arrestin-1/ARRB1. Phosphorylation of ARRB1 by GRK5 inhibits G-protein independent MAPK1/MAPK3 signaling downstream of 5HT4-receptors. Phosphorylation of HDAC5, a repressor of myocyte enhancer factor 2 (MEF2) leading to nuclear export of HDAC5 and allowing MEF2-mediated transcription. Phosphorylation of TP53/p53, a crucial tumor suppressor, inhibits TP53/p53-mediated apoptosis. Phosphorylation of ST13 regulates internalization of the chemokine receptor. Phosphorylates rhodopsin (RHO) (in vitro) and a non G-protein-coupled receptor, LRP6 during Wnt signaling (in vitro).</text>
</comment>
<comment type="catalytic activity">
    <reaction>
        <text>[G-protein-coupled receptor] + ATP = [G-protein-coupled receptor]-phosphate + ADP + H(+)</text>
        <dbReference type="Rhea" id="RHEA:12008"/>
        <dbReference type="Rhea" id="RHEA-COMP:11260"/>
        <dbReference type="Rhea" id="RHEA-COMP:11261"/>
        <dbReference type="ChEBI" id="CHEBI:15378"/>
        <dbReference type="ChEBI" id="CHEBI:30616"/>
        <dbReference type="ChEBI" id="CHEBI:43176"/>
        <dbReference type="ChEBI" id="CHEBI:68546"/>
        <dbReference type="ChEBI" id="CHEBI:456216"/>
        <dbReference type="EC" id="2.7.11.16"/>
    </reaction>
</comment>
<comment type="activity regulation">
    <text evidence="1">Inhibited by calmodulin with an IC(50) of 50 nM. Calmodulin inhibits GRK5 association with receptor and phospholipid (By similarity).</text>
</comment>
<comment type="subunit">
    <text evidence="2 3 10">Interacts with ST13 (via the C-terminus 303-319 AA) (By similarity). Interacts with TP53/p53 (By similarity). Interacts with HTR4 (via C-terminus 330-346 AA); this interaction is promoted by 5-HT (serotonin) (PubMed:18711143). Interacts with HDAC5 (By similarity). Interacts with GIT1 (By similarity).</text>
</comment>
<comment type="interaction">
    <interactant intactId="EBI-8367081">
        <id>Q8VEB1</id>
    </interactant>
    <interactant intactId="EBI-715576">
        <id>Q9UQL6</id>
        <label>HDAC5</label>
    </interactant>
    <organismsDiffer>true</organismsDiffer>
    <experiments>2</experiments>
</comment>
<comment type="subcellular location">
    <subcellularLocation>
        <location evidence="1">Cytoplasm</location>
    </subcellularLocation>
    <subcellularLocation>
        <location>Nucleus</location>
    </subcellularLocation>
    <subcellularLocation>
        <location>Cell membrane</location>
        <topology>Peripheral membrane protein</topology>
    </subcellularLocation>
    <text evidence="1">Predominantly localized at the plasma membrane, targeted to the cell surface through the interaction with phospholipids. Nucleus localization is regulated in a GPCR and Ca(2+)/calmodulin-dependent fashion (By similarity).</text>
</comment>
<comment type="PTM">
    <text evidence="2">Autophosphorylated. Autophosphorylation may play a critical role in the regulation of GRK5 kinase activity.</text>
</comment>
<comment type="disruption phenotype">
    <text evidence="8 9 11 12">No obvious phenotype due to the redundancy of GRK subtypes in the regulation of GPCR signaling. Deficient mice are viable and showed no anatomic or behavioral abnormalities, only a slight decrease in body temperature. However deficient mice shown altered central and lung M2 muscarinic receptor regulation, with normal heart M2 receptor regulation. GRK5 deficiency leads to a reduced hippocampal acetylcholine release and cholinergic hypofunction by selective impairment of desensitization of presynaptic M2/M4 autoreceptors and promotes amyloid-beta accumulation.</text>
</comment>
<comment type="similarity">
    <text evidence="13">Belongs to the protein kinase superfamily. AGC Ser/Thr protein kinase family. GPRK subfamily.</text>
</comment>
<sequence length="590" mass="67732">MELENIVANTVLLKAREGGGGKRKGKSKKWKEILKFPHISQCEDLRRTIDRDYYSLCDKQPIGRLLFRQFCETRPGLECYIQFLDLVAEYEITPDENLGAKGKEIMTKYLTPKSPVFIAQVGQDLVSQTEKKLLQSPCKELFSACAQSVHDYLKGDPFHEYLDSMYFDRFLQWKWLERQPVTKNTFRQYRVLGKGGFGEVCACQVRATGKMYACKRLEKKRIKKRKGESMALNEKQILEKVNSQFVVNLAYAYETKDALCLVLTIMNGGDLKFHIYNMGNPGFEEERALFYAAEILCGLEDLHRENTVYRDLKPENILLDDYGHIRISDLGLAVKIPEGDLIRGRVGTVGYMAPEVLNNQRYGLSPDYWGLGCLIYEMIEGQSPFRGRKEKVKREEVDRRVLETEEVYSSKFSEEAKSICNMLLTKDSKQRLGCQEEGAAEVKRHPFFRNMNFKRLEAGMLDPPFVPDPRAVYCKDVLDIEQFSTVKGVNLDHTDDDFYSKFSTGSVPIPWQNEMIETECFKELNVFGPNGTLSPDLNRSQPPEPPKKGLFHRLFRRQHQSNSKSSPTPKTSCNHRINSNHINSNSTGSS</sequence>
<organism>
    <name type="scientific">Mus musculus</name>
    <name type="common">Mouse</name>
    <dbReference type="NCBI Taxonomy" id="10090"/>
    <lineage>
        <taxon>Eukaryota</taxon>
        <taxon>Metazoa</taxon>
        <taxon>Chordata</taxon>
        <taxon>Craniata</taxon>
        <taxon>Vertebrata</taxon>
        <taxon>Euteleostomi</taxon>
        <taxon>Mammalia</taxon>
        <taxon>Eutheria</taxon>
        <taxon>Euarchontoglires</taxon>
        <taxon>Glires</taxon>
        <taxon>Rodentia</taxon>
        <taxon>Myomorpha</taxon>
        <taxon>Muroidea</taxon>
        <taxon>Muridae</taxon>
        <taxon>Murinae</taxon>
        <taxon>Mus</taxon>
        <taxon>Mus</taxon>
    </lineage>
</organism>
<gene>
    <name type="primary">Grk5</name>
    <name type="synonym">Gprk5</name>
</gene>
<name>GRK5_MOUSE</name>
<evidence type="ECO:0000250" key="1"/>
<evidence type="ECO:0000250" key="2">
    <source>
        <dbReference type="UniProtKB" id="P34947"/>
    </source>
</evidence>
<evidence type="ECO:0000250" key="3">
    <source>
        <dbReference type="UniProtKB" id="Q62833"/>
    </source>
</evidence>
<evidence type="ECO:0000255" key="4">
    <source>
        <dbReference type="PROSITE-ProRule" id="PRU00159"/>
    </source>
</evidence>
<evidence type="ECO:0000255" key="5">
    <source>
        <dbReference type="PROSITE-ProRule" id="PRU00171"/>
    </source>
</evidence>
<evidence type="ECO:0000255" key="6">
    <source>
        <dbReference type="PROSITE-ProRule" id="PRU00618"/>
    </source>
</evidence>
<evidence type="ECO:0000256" key="7">
    <source>
        <dbReference type="SAM" id="MobiDB-lite"/>
    </source>
</evidence>
<evidence type="ECO:0000269" key="8">
    <source>
    </source>
</evidence>
<evidence type="ECO:0000269" key="9">
    <source>
    </source>
</evidence>
<evidence type="ECO:0000269" key="10">
    <source>
    </source>
</evidence>
<evidence type="ECO:0000269" key="11">
    <source>
    </source>
</evidence>
<evidence type="ECO:0000269" key="12">
    <source>
    </source>
</evidence>
<evidence type="ECO:0000305" key="13"/>
<evidence type="ECO:0007744" key="14">
    <source>
    </source>
</evidence>
<evidence type="ECO:0007744" key="15">
    <source>
    </source>
</evidence>
<reference key="1">
    <citation type="journal article" date="1999" name="J. Biol. Chem.">
        <title>The GRK4 subfamily of G protein-coupled receptor kinases. Alternative splicing, gene organization, and sequence conservation.</title>
        <authorList>
            <person name="Premont R.T."/>
            <person name="Macrae A.D."/>
            <person name="Aparicio S.A."/>
            <person name="Kendall H.E."/>
            <person name="Welch J.E."/>
            <person name="Lefkowitz R.J."/>
        </authorList>
    </citation>
    <scope>NUCLEOTIDE SEQUENCE [GENOMIC DNA / MRNA]</scope>
    <source>
        <strain>129/SvJ</strain>
    </source>
</reference>
<reference key="2">
    <citation type="journal article" date="2004" name="Genome Res.">
        <title>The status, quality, and expansion of the NIH full-length cDNA project: the Mammalian Gene Collection (MGC).</title>
        <authorList>
            <consortium name="The MGC Project Team"/>
        </authorList>
    </citation>
    <scope>NUCLEOTIDE SEQUENCE [LARGE SCALE MRNA]</scope>
</reference>
<reference key="3">
    <citation type="journal article" date="1999" name="Neuron">
        <title>Muscarinic supersensitivity and impaired receptor desensitization in G protein-coupled receptor kinase 5-deficient mice.</title>
        <authorList>
            <person name="Gainetdinov R.R."/>
            <person name="Bohn L.M."/>
            <person name="Walker J.K."/>
            <person name="Laporte S.A."/>
            <person name="Macrae A.D."/>
            <person name="Caron M.G."/>
            <person name="Lefkowitz R.J."/>
            <person name="Premont R.T."/>
        </authorList>
    </citation>
    <scope>DISRUPTION PHENOTYPE</scope>
    <scope>FUNCTION</scope>
</reference>
<reference key="4">
    <citation type="journal article" date="2004" name="Am. J. Physiol.">
        <title>G protein-coupled receptor kinase 5 regulates airway responses induced by muscarinic receptor activation.</title>
        <authorList>
            <person name="Walker J.K."/>
            <person name="Gainetdinov R.R."/>
            <person name="Feldman D.S."/>
            <person name="McFawn P.K."/>
            <person name="Caron M.G."/>
            <person name="Lefkowitz R.J."/>
            <person name="Premont R.T."/>
            <person name="Fisher J.T."/>
        </authorList>
    </citation>
    <scope>DISRUPTION PHENOTYPE</scope>
    <scope>FUNCTION</scope>
</reference>
<reference key="5">
    <citation type="journal article" date="2007" name="Proc. Natl. Acad. Sci. U.S.A.">
        <title>Large-scale phosphorylation analysis of mouse liver.</title>
        <authorList>
            <person name="Villen J."/>
            <person name="Beausoleil S.A."/>
            <person name="Gerber S.A."/>
            <person name="Gygi S.P."/>
        </authorList>
    </citation>
    <scope>PHOSPHORYLATION [LARGE SCALE ANALYSIS] AT SER-484 AND THR-485</scope>
    <scope>IDENTIFICATION BY MASS SPECTROMETRY [LARGE SCALE ANALYSIS]</scope>
    <source>
        <tissue>Liver</tissue>
    </source>
</reference>
<reference key="6">
    <citation type="journal article" date="2008" name="Proc. Natl. Acad. Sci. U.S.A.">
        <title>Uncovering G protein-coupled receptor kinase-5 as a histone deacetylase kinase in the nucleus of cardiomyocytes.</title>
        <authorList>
            <person name="Martini J.S."/>
            <person name="Raake P."/>
            <person name="Vinge L.E."/>
            <person name="DeGeorge B.R. Jr."/>
            <person name="Chuprun J.K."/>
            <person name="Harris D.M."/>
            <person name="Gao E."/>
            <person name="Eckhart A.D."/>
            <person name="Pitcher J.A."/>
            <person name="Koch W.J."/>
        </authorList>
    </citation>
    <scope>SUBCELLULAR LOCATION</scope>
    <scope>FUNCTION IN PHOSPHORYLATION OF HDAC5</scope>
    <scope>INTERACTION WITH HDAC5</scope>
</reference>
<reference key="7">
    <citation type="journal article" date="2009" name="J. Biol. Chem.">
        <title>GRK5 deficiency leads to reduced hippocampal acetylcholine level via impaired presynaptic M2/M4 autoreceptor desensitization.</title>
        <authorList>
            <person name="Liu J."/>
            <person name="Rasul I."/>
            <person name="Sun Y."/>
            <person name="Wu G."/>
            <person name="Li L."/>
            <person name="Premont R.T."/>
            <person name="Suo W.Z."/>
        </authorList>
    </citation>
    <scope>SUBCELLULAR LOCATION</scope>
    <scope>DISRUPTION PHENOTYPE</scope>
    <scope>FUNCTION</scope>
</reference>
<reference key="8">
    <citation type="journal article" date="2010" name="Cell">
        <title>A tissue-specific atlas of mouse protein phosphorylation and expression.</title>
        <authorList>
            <person name="Huttlin E.L."/>
            <person name="Jedrychowski M.P."/>
            <person name="Elias J.E."/>
            <person name="Goswami T."/>
            <person name="Rad R."/>
            <person name="Beausoleil S.A."/>
            <person name="Villen J."/>
            <person name="Haas W."/>
            <person name="Sowa M.E."/>
            <person name="Gygi S.P."/>
        </authorList>
    </citation>
    <scope>PHOSPHORYLATION [LARGE SCALE ANALYSIS] AT SER-136; SER-484; THR-485 AND SER-579</scope>
    <scope>IDENTIFICATION BY MASS SPECTROMETRY [LARGE SCALE ANALYSIS]</scope>
    <source>
        <tissue>Brain</tissue>
        <tissue>Kidney</tissue>
        <tissue>Lung</tissue>
    </source>
</reference>
<reference key="9">
    <citation type="journal article" date="2010" name="J. Biol. Chem.">
        <title>GRK5 deficiency accelerates beta-amyloid accumulation in Tg2576 mice via impaired cholinergic activity.</title>
        <authorList>
            <person name="Cheng S."/>
            <person name="Li L."/>
            <person name="He S."/>
            <person name="Liu J."/>
            <person name="Sun Y."/>
            <person name="He M."/>
            <person name="Grasing K."/>
            <person name="Premont R.T."/>
            <person name="Suo W.Z."/>
        </authorList>
    </citation>
    <scope>DISRUPTION PHENOTYPE</scope>
</reference>
<proteinExistence type="evidence at protein level"/>